<proteinExistence type="inferred from homology"/>
<dbReference type="EC" id="7.1.2.2" evidence="1"/>
<dbReference type="EMBL" id="DQ383815">
    <property type="protein sequence ID" value="ABD47140.1"/>
    <property type="molecule type" value="Genomic_DNA"/>
</dbReference>
<dbReference type="RefSeq" id="YP_588111.1">
    <property type="nucleotide sequence ID" value="NC_007977.1"/>
</dbReference>
<dbReference type="SMR" id="Q1KXW5"/>
<dbReference type="GeneID" id="4055579"/>
<dbReference type="KEGG" id="han:4055579"/>
<dbReference type="OrthoDB" id="9805536at2759"/>
<dbReference type="PhylomeDB" id="Q1KXW5"/>
<dbReference type="GO" id="GO:0009535">
    <property type="term" value="C:chloroplast thylakoid membrane"/>
    <property type="evidence" value="ECO:0007669"/>
    <property type="project" value="UniProtKB-SubCell"/>
</dbReference>
<dbReference type="GO" id="GO:0045259">
    <property type="term" value="C:proton-transporting ATP synthase complex"/>
    <property type="evidence" value="ECO:0007669"/>
    <property type="project" value="UniProtKB-KW"/>
</dbReference>
<dbReference type="GO" id="GO:0005524">
    <property type="term" value="F:ATP binding"/>
    <property type="evidence" value="ECO:0007669"/>
    <property type="project" value="UniProtKB-UniRule"/>
</dbReference>
<dbReference type="GO" id="GO:0046933">
    <property type="term" value="F:proton-transporting ATP synthase activity, rotational mechanism"/>
    <property type="evidence" value="ECO:0007669"/>
    <property type="project" value="UniProtKB-UniRule"/>
</dbReference>
<dbReference type="CDD" id="cd18113">
    <property type="entry name" value="ATP-synt_F1_alpha_C"/>
    <property type="match status" value="1"/>
</dbReference>
<dbReference type="CDD" id="cd18116">
    <property type="entry name" value="ATP-synt_F1_alpha_N"/>
    <property type="match status" value="1"/>
</dbReference>
<dbReference type="CDD" id="cd01132">
    <property type="entry name" value="F1-ATPase_alpha_CD"/>
    <property type="match status" value="1"/>
</dbReference>
<dbReference type="FunFam" id="1.20.150.20:FF:000001">
    <property type="entry name" value="ATP synthase subunit alpha"/>
    <property type="match status" value="1"/>
</dbReference>
<dbReference type="FunFam" id="2.40.30.20:FF:000001">
    <property type="entry name" value="ATP synthase subunit alpha"/>
    <property type="match status" value="1"/>
</dbReference>
<dbReference type="FunFam" id="3.40.50.300:FF:000002">
    <property type="entry name" value="ATP synthase subunit alpha"/>
    <property type="match status" value="1"/>
</dbReference>
<dbReference type="Gene3D" id="2.40.30.20">
    <property type="match status" value="1"/>
</dbReference>
<dbReference type="Gene3D" id="1.20.150.20">
    <property type="entry name" value="ATP synthase alpha/beta chain, C-terminal domain"/>
    <property type="match status" value="1"/>
</dbReference>
<dbReference type="Gene3D" id="3.40.50.300">
    <property type="entry name" value="P-loop containing nucleotide triphosphate hydrolases"/>
    <property type="match status" value="1"/>
</dbReference>
<dbReference type="HAMAP" id="MF_01346">
    <property type="entry name" value="ATP_synth_alpha_bact"/>
    <property type="match status" value="1"/>
</dbReference>
<dbReference type="InterPro" id="IPR023366">
    <property type="entry name" value="ATP_synth_asu-like_sf"/>
</dbReference>
<dbReference type="InterPro" id="IPR000793">
    <property type="entry name" value="ATP_synth_asu_C"/>
</dbReference>
<dbReference type="InterPro" id="IPR038376">
    <property type="entry name" value="ATP_synth_asu_C_sf"/>
</dbReference>
<dbReference type="InterPro" id="IPR033732">
    <property type="entry name" value="ATP_synth_F1_a_nt-bd_dom"/>
</dbReference>
<dbReference type="InterPro" id="IPR005294">
    <property type="entry name" value="ATP_synth_F1_asu"/>
</dbReference>
<dbReference type="InterPro" id="IPR020003">
    <property type="entry name" value="ATPase_a/bsu_AS"/>
</dbReference>
<dbReference type="InterPro" id="IPR004100">
    <property type="entry name" value="ATPase_F1/V1/A1_a/bsu_N"/>
</dbReference>
<dbReference type="InterPro" id="IPR036121">
    <property type="entry name" value="ATPase_F1/V1/A1_a/bsu_N_sf"/>
</dbReference>
<dbReference type="InterPro" id="IPR000194">
    <property type="entry name" value="ATPase_F1/V1/A1_a/bsu_nucl-bd"/>
</dbReference>
<dbReference type="InterPro" id="IPR027417">
    <property type="entry name" value="P-loop_NTPase"/>
</dbReference>
<dbReference type="NCBIfam" id="TIGR00962">
    <property type="entry name" value="atpA"/>
    <property type="match status" value="1"/>
</dbReference>
<dbReference type="NCBIfam" id="NF009884">
    <property type="entry name" value="PRK13343.1"/>
    <property type="match status" value="1"/>
</dbReference>
<dbReference type="PANTHER" id="PTHR48082">
    <property type="entry name" value="ATP SYNTHASE SUBUNIT ALPHA, MITOCHONDRIAL"/>
    <property type="match status" value="1"/>
</dbReference>
<dbReference type="PANTHER" id="PTHR48082:SF2">
    <property type="entry name" value="ATP SYNTHASE SUBUNIT ALPHA, MITOCHONDRIAL"/>
    <property type="match status" value="1"/>
</dbReference>
<dbReference type="Pfam" id="PF00006">
    <property type="entry name" value="ATP-synt_ab"/>
    <property type="match status" value="1"/>
</dbReference>
<dbReference type="Pfam" id="PF00306">
    <property type="entry name" value="ATP-synt_ab_C"/>
    <property type="match status" value="1"/>
</dbReference>
<dbReference type="Pfam" id="PF02874">
    <property type="entry name" value="ATP-synt_ab_N"/>
    <property type="match status" value="1"/>
</dbReference>
<dbReference type="PIRSF" id="PIRSF039088">
    <property type="entry name" value="F_ATPase_subunit_alpha"/>
    <property type="match status" value="1"/>
</dbReference>
<dbReference type="SUPFAM" id="SSF47917">
    <property type="entry name" value="C-terminal domain of alpha and beta subunits of F1 ATP synthase"/>
    <property type="match status" value="1"/>
</dbReference>
<dbReference type="SUPFAM" id="SSF50615">
    <property type="entry name" value="N-terminal domain of alpha and beta subunits of F1 ATP synthase"/>
    <property type="match status" value="1"/>
</dbReference>
<dbReference type="SUPFAM" id="SSF52540">
    <property type="entry name" value="P-loop containing nucleoside triphosphate hydrolases"/>
    <property type="match status" value="1"/>
</dbReference>
<dbReference type="PROSITE" id="PS00152">
    <property type="entry name" value="ATPASE_ALPHA_BETA"/>
    <property type="match status" value="1"/>
</dbReference>
<gene>
    <name evidence="1" type="primary">atpA</name>
</gene>
<geneLocation type="chloroplast"/>
<sequence>MVTIQADEISNIIRERIEQYNREVKIVNTGTVLQVGDGIARIHGLDEVMAGELVEFQEGTIGIALNLESTNVGVVLMGDGLLIQEGSSVKATGKIAQIPVSEAYLGRVINALAKPIDGRGEISSSEYRLIESPAPGIISRRSVYEPLQTGLIAIDSMIPIGRGQRELIIGDRQTGKTAVATDTILNQQGQNVICVYVAIGQKASSVAQVVTTFQEKGAMEYTIVVAETADSPATLQYLAPYTGAALAEYFMYRERHTLIIYDDLSKQAQAYRQMSLLLRRPPGREAYPGDVFYLHSRLLERAAKLSSLLGEGSMTALPIVETQSGDVSAYIPTNVISITDGQIFLSADLFNAGIRPAINVGISVSRVGSAAQIKAMKQVAGKLKLELAQFAELEAFAQFASDLDKATQNQLARGQRLRELLKQSQSAPLAVEEQILTIYTGTNGYLDSLEVGQVRKFLVELRTYLKTNKPQFQEIISSTKIFTEEAEAILKEAIQEQRERFILQEQAA</sequence>
<reference key="1">
    <citation type="submission" date="2006-01" db="EMBL/GenBank/DDBJ databases">
        <title>A comparison of the first two published chloroplast genomes in Asteraceae: Lactuca and Helianthus.</title>
        <authorList>
            <person name="Timme R.E."/>
            <person name="Kuehl J.V."/>
            <person name="Boore J.L."/>
            <person name="Jansen R.K."/>
        </authorList>
    </citation>
    <scope>NUCLEOTIDE SEQUENCE [LARGE SCALE GENOMIC DNA]</scope>
    <source>
        <strain>cv. HA383</strain>
    </source>
</reference>
<feature type="chain" id="PRO_0000256121" description="ATP synthase subunit alpha, chloroplastic">
    <location>
        <begin position="1"/>
        <end position="508"/>
    </location>
</feature>
<feature type="binding site" evidence="1">
    <location>
        <begin position="170"/>
        <end position="177"/>
    </location>
    <ligand>
        <name>ATP</name>
        <dbReference type="ChEBI" id="CHEBI:30616"/>
    </ligand>
</feature>
<feature type="site" description="Required for activity" evidence="1">
    <location>
        <position position="363"/>
    </location>
</feature>
<comment type="function">
    <text evidence="1">Produces ATP from ADP in the presence of a proton gradient across the membrane. The alpha chain is a regulatory subunit.</text>
</comment>
<comment type="catalytic activity">
    <reaction evidence="1">
        <text>ATP + H2O + 4 H(+)(in) = ADP + phosphate + 5 H(+)(out)</text>
        <dbReference type="Rhea" id="RHEA:57720"/>
        <dbReference type="ChEBI" id="CHEBI:15377"/>
        <dbReference type="ChEBI" id="CHEBI:15378"/>
        <dbReference type="ChEBI" id="CHEBI:30616"/>
        <dbReference type="ChEBI" id="CHEBI:43474"/>
        <dbReference type="ChEBI" id="CHEBI:456216"/>
        <dbReference type="EC" id="7.1.2.2"/>
    </reaction>
</comment>
<comment type="subunit">
    <text evidence="1">F-type ATPases have 2 components, CF(1) - the catalytic core - and CF(0) - the membrane proton channel. CF(1) has five subunits: alpha(3), beta(3), gamma(1), delta(1), epsilon(1). CF(0) has four main subunits: a, b, b' and c.</text>
</comment>
<comment type="subcellular location">
    <subcellularLocation>
        <location evidence="1">Plastid</location>
        <location evidence="1">Chloroplast thylakoid membrane</location>
        <topology evidence="1">Peripheral membrane protein</topology>
    </subcellularLocation>
</comment>
<comment type="similarity">
    <text evidence="1">Belongs to the ATPase alpha/beta chains family.</text>
</comment>
<protein>
    <recommendedName>
        <fullName evidence="1">ATP synthase subunit alpha, chloroplastic</fullName>
        <ecNumber evidence="1">7.1.2.2</ecNumber>
    </recommendedName>
    <alternativeName>
        <fullName evidence="1">ATP synthase F1 sector subunit alpha</fullName>
    </alternativeName>
    <alternativeName>
        <fullName evidence="1">F-ATPase subunit alpha</fullName>
    </alternativeName>
</protein>
<evidence type="ECO:0000255" key="1">
    <source>
        <dbReference type="HAMAP-Rule" id="MF_01346"/>
    </source>
</evidence>
<keyword id="KW-0066">ATP synthesis</keyword>
<keyword id="KW-0067">ATP-binding</keyword>
<keyword id="KW-0139">CF(1)</keyword>
<keyword id="KW-0150">Chloroplast</keyword>
<keyword id="KW-0375">Hydrogen ion transport</keyword>
<keyword id="KW-0406">Ion transport</keyword>
<keyword id="KW-0472">Membrane</keyword>
<keyword id="KW-0547">Nucleotide-binding</keyword>
<keyword id="KW-0934">Plastid</keyword>
<keyword id="KW-0793">Thylakoid</keyword>
<keyword id="KW-1278">Translocase</keyword>
<keyword id="KW-0813">Transport</keyword>
<name>ATPA_HELAN</name>
<organism>
    <name type="scientific">Helianthus annuus</name>
    <name type="common">Common sunflower</name>
    <dbReference type="NCBI Taxonomy" id="4232"/>
    <lineage>
        <taxon>Eukaryota</taxon>
        <taxon>Viridiplantae</taxon>
        <taxon>Streptophyta</taxon>
        <taxon>Embryophyta</taxon>
        <taxon>Tracheophyta</taxon>
        <taxon>Spermatophyta</taxon>
        <taxon>Magnoliopsida</taxon>
        <taxon>eudicotyledons</taxon>
        <taxon>Gunneridae</taxon>
        <taxon>Pentapetalae</taxon>
        <taxon>asterids</taxon>
        <taxon>campanulids</taxon>
        <taxon>Asterales</taxon>
        <taxon>Asteraceae</taxon>
        <taxon>Asteroideae</taxon>
        <taxon>Heliantheae alliance</taxon>
        <taxon>Heliantheae</taxon>
        <taxon>Helianthus</taxon>
    </lineage>
</organism>
<accession>Q1KXW5</accession>